<proteinExistence type="evidence at transcript level"/>
<name>GLYM2_FLAPR</name>
<sequence>MAMASALRRLSSSSNKPLQRLFNGGHLYSMSSLPSEAVYEKERPGVTWPKQLNAPLEVGDPEIADIIELEKARQWKGLELILSENFTSLSVMQAVGSVMTNKYSEGYPGARYYGGNEYIDMAETLCQKRALEAFRLDAAKWGVNVQPLSGSPANFHVYTALLKAHDRIMALDLPHGGHLSHGYQTDTKKISAVSIFFETMPYRLNESTGYIDYDQLEKSATLFRPKLIVAGASAYARLYDYARIRKVCDKQKAILLADMAHISGLVAAGVIPSPFDYADVVTTTTHKSLRGPRGAMIFFRKGVKEVNKQGKEVLYDYEDKINQAVFPGLQGGPHNHTITGLAVALKQATTAEYKAYQEQVMSNCAKFAETLVKSGYELVSGGTENHLVLVNLKNKGIDGSRVEKVLEAVHIAANKNTVPGDVSAMVPGGIRMGTPALTSRGFVEEDFAKVAYLFDLAVKLAVKIKGEAQGTKLKDFVAAMQSSAFQSEISKLRHDVEEYAKQFPTIGFEKETMKYKN</sequence>
<protein>
    <recommendedName>
        <fullName>Serine hydroxymethyltransferase 2, mitochondrial</fullName>
        <shortName>SHMT2</shortName>
        <ecNumber>2.1.2.1</ecNumber>
    </recommendedName>
    <alternativeName>
        <fullName>Glycine hydroxymethyltransferase 2</fullName>
    </alternativeName>
    <alternativeName>
        <fullName>Serine methylase 2</fullName>
    </alternativeName>
</protein>
<comment type="function">
    <text>Catalyzes the interconversion of serine and glycine.</text>
</comment>
<comment type="catalytic activity">
    <reaction>
        <text>(6R)-5,10-methylene-5,6,7,8-tetrahydrofolate + glycine + H2O = (6S)-5,6,7,8-tetrahydrofolate + L-serine</text>
        <dbReference type="Rhea" id="RHEA:15481"/>
        <dbReference type="ChEBI" id="CHEBI:15377"/>
        <dbReference type="ChEBI" id="CHEBI:15636"/>
        <dbReference type="ChEBI" id="CHEBI:33384"/>
        <dbReference type="ChEBI" id="CHEBI:57305"/>
        <dbReference type="ChEBI" id="CHEBI:57453"/>
        <dbReference type="EC" id="2.1.2.1"/>
    </reaction>
</comment>
<comment type="cofactor">
    <cofactor evidence="1">
        <name>pyridoxal 5'-phosphate</name>
        <dbReference type="ChEBI" id="CHEBI:597326"/>
    </cofactor>
</comment>
<comment type="pathway">
    <text>One-carbon metabolism; tetrahydrofolate interconversion.</text>
</comment>
<comment type="subunit">
    <text evidence="1">Homotetramer.</text>
</comment>
<comment type="subcellular location">
    <subcellularLocation>
        <location>Mitochondrion</location>
    </subcellularLocation>
</comment>
<comment type="similarity">
    <text evidence="2">Belongs to the SHMT family.</text>
</comment>
<organism>
    <name type="scientific">Flaveria pringlei</name>
    <dbReference type="NCBI Taxonomy" id="4226"/>
    <lineage>
        <taxon>Eukaryota</taxon>
        <taxon>Viridiplantae</taxon>
        <taxon>Streptophyta</taxon>
        <taxon>Embryophyta</taxon>
        <taxon>Tracheophyta</taxon>
        <taxon>Spermatophyta</taxon>
        <taxon>Magnoliopsida</taxon>
        <taxon>eudicotyledons</taxon>
        <taxon>Gunneridae</taxon>
        <taxon>Pentapetalae</taxon>
        <taxon>asterids</taxon>
        <taxon>campanulids</taxon>
        <taxon>Asterales</taxon>
        <taxon>Asteraceae</taxon>
        <taxon>Asteroideae</taxon>
        <taxon>Heliantheae alliance</taxon>
        <taxon>Tageteae</taxon>
        <taxon>Flaveria</taxon>
    </lineage>
</organism>
<keyword id="KW-0496">Mitochondrion</keyword>
<keyword id="KW-0554">One-carbon metabolism</keyword>
<keyword id="KW-0663">Pyridoxal phosphate</keyword>
<keyword id="KW-0808">Transferase</keyword>
<keyword id="KW-0809">Transit peptide</keyword>
<evidence type="ECO:0000250" key="1"/>
<evidence type="ECO:0000305" key="2"/>
<accession>P49358</accession>
<reference key="1">
    <citation type="online journal article" date="1998" name="Plant Gene Register">
        <title>Cloning and sequencing of two isoforms of serine hydroxymethyltransferase from Flaveria pringlei.</title>
        <authorList>
            <person name="Kopriva S."/>
            <person name="Bauwe H."/>
        </authorList>
        <locator>PGR98-051</locator>
    </citation>
    <scope>NUCLEOTIDE SEQUENCE [MRNA]</scope>
    <source>
        <tissue>Leaf</tissue>
    </source>
</reference>
<feature type="transit peptide" description="Mitochondrion" evidence="1">
    <location>
        <begin position="1"/>
        <end position="31"/>
    </location>
</feature>
<feature type="chain" id="PRO_0000032572" description="Serine hydroxymethyltransferase 2, mitochondrial">
    <location>
        <begin position="32"/>
        <end position="517"/>
    </location>
</feature>
<feature type="modified residue" description="N6-(pyridoxal phosphate)lysine" evidence="1">
    <location>
        <position position="287"/>
    </location>
</feature>
<dbReference type="EC" id="2.1.2.1"/>
<dbReference type="EMBL" id="Z25860">
    <property type="protein sequence ID" value="CAA81079.1"/>
    <property type="molecule type" value="mRNA"/>
</dbReference>
<dbReference type="PIR" id="S40213">
    <property type="entry name" value="S40213"/>
</dbReference>
<dbReference type="SMR" id="P49358"/>
<dbReference type="UniPathway" id="UPA00193"/>
<dbReference type="GO" id="GO:0005739">
    <property type="term" value="C:mitochondrion"/>
    <property type="evidence" value="ECO:0007669"/>
    <property type="project" value="UniProtKB-SubCell"/>
</dbReference>
<dbReference type="GO" id="GO:0004372">
    <property type="term" value="F:glycine hydroxymethyltransferase activity"/>
    <property type="evidence" value="ECO:0007669"/>
    <property type="project" value="UniProtKB-EC"/>
</dbReference>
<dbReference type="GO" id="GO:0030170">
    <property type="term" value="F:pyridoxal phosphate binding"/>
    <property type="evidence" value="ECO:0007669"/>
    <property type="project" value="InterPro"/>
</dbReference>
<dbReference type="GO" id="GO:0019264">
    <property type="term" value="P:glycine biosynthetic process from serine"/>
    <property type="evidence" value="ECO:0007669"/>
    <property type="project" value="InterPro"/>
</dbReference>
<dbReference type="GO" id="GO:0035999">
    <property type="term" value="P:tetrahydrofolate interconversion"/>
    <property type="evidence" value="ECO:0007669"/>
    <property type="project" value="UniProtKB-UniPathway"/>
</dbReference>
<dbReference type="CDD" id="cd00378">
    <property type="entry name" value="SHMT"/>
    <property type="match status" value="1"/>
</dbReference>
<dbReference type="FunFam" id="3.40.640.10:FF:000050">
    <property type="entry name" value="Serine hydroxymethyltransferase"/>
    <property type="match status" value="1"/>
</dbReference>
<dbReference type="Gene3D" id="3.90.1150.10">
    <property type="entry name" value="Aspartate Aminotransferase, domain 1"/>
    <property type="match status" value="1"/>
</dbReference>
<dbReference type="Gene3D" id="3.40.640.10">
    <property type="entry name" value="Type I PLP-dependent aspartate aminotransferase-like (Major domain)"/>
    <property type="match status" value="1"/>
</dbReference>
<dbReference type="HAMAP" id="MF_00051">
    <property type="entry name" value="SHMT"/>
    <property type="match status" value="1"/>
</dbReference>
<dbReference type="InterPro" id="IPR015424">
    <property type="entry name" value="PyrdxlP-dep_Trfase"/>
</dbReference>
<dbReference type="InterPro" id="IPR015421">
    <property type="entry name" value="PyrdxlP-dep_Trfase_major"/>
</dbReference>
<dbReference type="InterPro" id="IPR015422">
    <property type="entry name" value="PyrdxlP-dep_Trfase_small"/>
</dbReference>
<dbReference type="InterPro" id="IPR001085">
    <property type="entry name" value="Ser_HO-MeTrfase"/>
</dbReference>
<dbReference type="InterPro" id="IPR049943">
    <property type="entry name" value="Ser_HO-MeTrfase-like"/>
</dbReference>
<dbReference type="InterPro" id="IPR019798">
    <property type="entry name" value="Ser_HO-MeTrfase_PLP_BS"/>
</dbReference>
<dbReference type="InterPro" id="IPR039429">
    <property type="entry name" value="SHMT-like_dom"/>
</dbReference>
<dbReference type="NCBIfam" id="NF000586">
    <property type="entry name" value="PRK00011.1"/>
    <property type="match status" value="1"/>
</dbReference>
<dbReference type="PANTHER" id="PTHR11680">
    <property type="entry name" value="SERINE HYDROXYMETHYLTRANSFERASE"/>
    <property type="match status" value="1"/>
</dbReference>
<dbReference type="PANTHER" id="PTHR11680:SF28">
    <property type="entry name" value="SERINE HYDROXYMETHYLTRANSFERASE, MITOCHONDRIAL"/>
    <property type="match status" value="1"/>
</dbReference>
<dbReference type="Pfam" id="PF00464">
    <property type="entry name" value="SHMT"/>
    <property type="match status" value="1"/>
</dbReference>
<dbReference type="PIRSF" id="PIRSF000412">
    <property type="entry name" value="SHMT"/>
    <property type="match status" value="1"/>
</dbReference>
<dbReference type="SUPFAM" id="SSF53383">
    <property type="entry name" value="PLP-dependent transferases"/>
    <property type="match status" value="1"/>
</dbReference>
<dbReference type="PROSITE" id="PS00096">
    <property type="entry name" value="SHMT"/>
    <property type="match status" value="1"/>
</dbReference>